<feature type="signal peptide" evidence="1">
    <location>
        <begin position="1"/>
        <end position="16"/>
    </location>
</feature>
<feature type="chain" id="PRO_0000013661" description="Uncharacterized protein AF_1565">
    <location>
        <begin position="17"/>
        <end position="69"/>
    </location>
</feature>
<sequence length="69" mass="7652">MSLGLIFALLLTHAAAAKEIGIKTVNDYIKQGESHWYTSYVTSHTFDVYLVWNNPSNSLTLTVYSPDGS</sequence>
<proteinExistence type="inferred from homology"/>
<evidence type="ECO:0000255" key="1"/>
<organism>
    <name type="scientific">Archaeoglobus fulgidus (strain ATCC 49558 / DSM 4304 / JCM 9628 / NBRC 100126 / VC-16)</name>
    <dbReference type="NCBI Taxonomy" id="224325"/>
    <lineage>
        <taxon>Archaea</taxon>
        <taxon>Methanobacteriati</taxon>
        <taxon>Methanobacteriota</taxon>
        <taxon>Archaeoglobi</taxon>
        <taxon>Archaeoglobales</taxon>
        <taxon>Archaeoglobaceae</taxon>
        <taxon>Archaeoglobus</taxon>
    </lineage>
</organism>
<name>Y1565_ARCFU</name>
<protein>
    <recommendedName>
        <fullName>Uncharacterized protein AF_1565</fullName>
    </recommendedName>
</protein>
<dbReference type="EMBL" id="AE000782">
    <property type="protein sequence ID" value="AAB89688.1"/>
    <property type="molecule type" value="Genomic_DNA"/>
</dbReference>
<dbReference type="PIR" id="D69445">
    <property type="entry name" value="D69445"/>
</dbReference>
<dbReference type="STRING" id="224325.AF_1565"/>
<dbReference type="PaxDb" id="224325-AF_1565"/>
<dbReference type="EnsemblBacteria" id="AAB89688">
    <property type="protein sequence ID" value="AAB89688"/>
    <property type="gene ID" value="AF_1565"/>
</dbReference>
<dbReference type="KEGG" id="afu:AF_1565"/>
<dbReference type="eggNOG" id="arCOG04987">
    <property type="taxonomic scope" value="Archaea"/>
</dbReference>
<dbReference type="HOGENOM" id="CLU_2765814_0_0_2"/>
<dbReference type="Proteomes" id="UP000002199">
    <property type="component" value="Chromosome"/>
</dbReference>
<accession>O28707</accession>
<gene>
    <name type="ordered locus">AF_1565</name>
</gene>
<reference key="1">
    <citation type="journal article" date="1997" name="Nature">
        <title>The complete genome sequence of the hyperthermophilic, sulphate-reducing archaeon Archaeoglobus fulgidus.</title>
        <authorList>
            <person name="Klenk H.-P."/>
            <person name="Clayton R.A."/>
            <person name="Tomb J.-F."/>
            <person name="White O."/>
            <person name="Nelson K.E."/>
            <person name="Ketchum K.A."/>
            <person name="Dodson R.J."/>
            <person name="Gwinn M.L."/>
            <person name="Hickey E.K."/>
            <person name="Peterson J.D."/>
            <person name="Richardson D.L."/>
            <person name="Kerlavage A.R."/>
            <person name="Graham D.E."/>
            <person name="Kyrpides N.C."/>
            <person name="Fleischmann R.D."/>
            <person name="Quackenbush J."/>
            <person name="Lee N.H."/>
            <person name="Sutton G.G."/>
            <person name="Gill S.R."/>
            <person name="Kirkness E.F."/>
            <person name="Dougherty B.A."/>
            <person name="McKenney K."/>
            <person name="Adams M.D."/>
            <person name="Loftus B.J."/>
            <person name="Peterson S.N."/>
            <person name="Reich C.I."/>
            <person name="McNeil L.K."/>
            <person name="Badger J.H."/>
            <person name="Glodek A."/>
            <person name="Zhou L."/>
            <person name="Overbeek R."/>
            <person name="Gocayne J.D."/>
            <person name="Weidman J.F."/>
            <person name="McDonald L.A."/>
            <person name="Utterback T.R."/>
            <person name="Cotton M.D."/>
            <person name="Spriggs T."/>
            <person name="Artiach P."/>
            <person name="Kaine B.P."/>
            <person name="Sykes S.M."/>
            <person name="Sadow P.W."/>
            <person name="D'Andrea K.P."/>
            <person name="Bowman C."/>
            <person name="Fujii C."/>
            <person name="Garland S.A."/>
            <person name="Mason T.M."/>
            <person name="Olsen G.J."/>
            <person name="Fraser C.M."/>
            <person name="Smith H.O."/>
            <person name="Woese C.R."/>
            <person name="Venter J.C."/>
        </authorList>
    </citation>
    <scope>NUCLEOTIDE SEQUENCE [LARGE SCALE GENOMIC DNA]</scope>
    <source>
        <strain>ATCC 49558 / DSM 4304 / JCM 9628 / NBRC 100126 / VC-16</strain>
    </source>
</reference>
<keyword id="KW-1185">Reference proteome</keyword>
<keyword id="KW-0732">Signal</keyword>